<organism>
    <name type="scientific">Mus spretus</name>
    <name type="common">Western Mediterranean mouse</name>
    <name type="synonym">Algerian mouse</name>
    <dbReference type="NCBI Taxonomy" id="10096"/>
    <lineage>
        <taxon>Eukaryota</taxon>
        <taxon>Metazoa</taxon>
        <taxon>Chordata</taxon>
        <taxon>Craniata</taxon>
        <taxon>Vertebrata</taxon>
        <taxon>Euteleostomi</taxon>
        <taxon>Mammalia</taxon>
        <taxon>Eutheria</taxon>
        <taxon>Euarchontoglires</taxon>
        <taxon>Glires</taxon>
        <taxon>Rodentia</taxon>
        <taxon>Myomorpha</taxon>
        <taxon>Muroidea</taxon>
        <taxon>Muridae</taxon>
        <taxon>Murinae</taxon>
        <taxon>Mus</taxon>
        <taxon>Mus</taxon>
    </lineage>
</organism>
<gene>
    <name type="primary">Amd2</name>
</gene>
<comment type="function">
    <text evidence="3">Essential for biosynthesis of the polyamines spermidine and spermine. Promotes maintenance and self-renewal of embryonic stem cells, by maintaining spermine levels.</text>
</comment>
<comment type="catalytic activity">
    <reaction evidence="2">
        <text>S-adenosyl-L-methionine + H(+) = S-adenosyl 3-(methylsulfanyl)propylamine + CO2</text>
        <dbReference type="Rhea" id="RHEA:15981"/>
        <dbReference type="ChEBI" id="CHEBI:15378"/>
        <dbReference type="ChEBI" id="CHEBI:16526"/>
        <dbReference type="ChEBI" id="CHEBI:57443"/>
        <dbReference type="ChEBI" id="CHEBI:59789"/>
        <dbReference type="EC" id="4.1.1.50"/>
    </reaction>
</comment>
<comment type="cofactor">
    <cofactor evidence="1">
        <name>pyruvate</name>
        <dbReference type="ChEBI" id="CHEBI:15361"/>
    </cofactor>
    <text evidence="1">Binds 1 pyruvoyl group covalently per subunit.</text>
</comment>
<comment type="pathway">
    <text>Amine and polyamine biosynthesis; S-adenosylmethioninamine biosynthesis; S-adenosylmethioninamine from S-adenosyl-L-methionine: step 1/1.</text>
</comment>
<comment type="subunit">
    <text evidence="1">Heterotetramer of two alpha and two beta chains.</text>
</comment>
<comment type="PTM">
    <text evidence="4">Is synthesized initially as an inactive proenzyme. Formation of the active enzyme involves a self-maturation process in which the active site pyruvoyl group is generated from an internal serine residue via an autocatalytic post-translational modification. Two non-identical subunits are generated from the proenzyme in this reaction, and the pyruvate is formed at the N-terminus of the alpha chain, which is derived from the carboxyl end of the proenzyme. The post-translation cleavage follows an unusual pathway, termed non-hydrolytic serinolysis, in which the side chain hydroxyl group of the serine supplies its oxygen atom to form the C-terminus of the beta chain, while the remainder of the serine residue undergoes an oxidative deamination to produce ammonia and the pyruvoyl group blocking the N-terminus of the alpha chain.</text>
</comment>
<comment type="similarity">
    <text evidence="5">Belongs to the eukaryotic AdoMetDC family.</text>
</comment>
<feature type="chain" id="PRO_0000029967" description="S-adenosylmethionine decarboxylase 2 beta chain">
    <location>
        <begin position="1"/>
        <end position="67"/>
    </location>
</feature>
<feature type="chain" id="PRO_0000029968" description="S-adenosylmethionine decarboxylase 2 alpha chain">
    <location>
        <begin position="68"/>
        <end position="334"/>
    </location>
</feature>
<feature type="active site" evidence="4">
    <location>
        <position position="8"/>
    </location>
</feature>
<feature type="active site" evidence="4">
    <location>
        <position position="11"/>
    </location>
</feature>
<feature type="active site" description="Schiff-base intermediate with substrate; via pyruvic acid" evidence="4">
    <location>
        <position position="68"/>
    </location>
</feature>
<feature type="active site" description="Proton donor; for catalytic activity" evidence="4">
    <location>
        <position position="82"/>
    </location>
</feature>
<feature type="active site" description="Proton acceptor; for processing activity" evidence="4">
    <location>
        <position position="229"/>
    </location>
</feature>
<feature type="active site" description="Proton acceptor; for processing activity" evidence="4">
    <location>
        <position position="243"/>
    </location>
</feature>
<feature type="binding site" evidence="4">
    <location>
        <position position="7"/>
    </location>
    <ligand>
        <name>substrate</name>
    </ligand>
</feature>
<feature type="binding site" evidence="4">
    <location>
        <position position="67"/>
    </location>
    <ligand>
        <name>substrate</name>
    </ligand>
</feature>
<feature type="binding site" evidence="4">
    <location>
        <position position="223"/>
    </location>
    <ligand>
        <name>substrate</name>
    </ligand>
</feature>
<feature type="binding site" evidence="4">
    <location>
        <position position="247"/>
    </location>
    <ligand>
        <name>substrate</name>
    </ligand>
</feature>
<feature type="site" description="Cleavage (non-hydrolytic); by autolysis" evidence="4">
    <location>
        <begin position="67"/>
        <end position="68"/>
    </location>
</feature>
<feature type="modified residue" description="Pyruvic acid (Ser); by autocatalysis" evidence="4">
    <location>
        <position position="68"/>
    </location>
</feature>
<feature type="modified residue" description="Phosphoserine" evidence="4">
    <location>
        <position position="298"/>
    </location>
</feature>
<name>DCAM2_MUSSP</name>
<dbReference type="EC" id="4.1.1.50" evidence="2"/>
<dbReference type="EMBL" id="AF052604">
    <property type="protein sequence ID" value="AAD45965.1"/>
    <property type="molecule type" value="Genomic_DNA"/>
</dbReference>
<dbReference type="SMR" id="P82185"/>
<dbReference type="MGI" id="MGI:1333111">
    <property type="gene designation" value="Amd2"/>
</dbReference>
<dbReference type="UniPathway" id="UPA00331">
    <property type="reaction ID" value="UER00451"/>
</dbReference>
<dbReference type="GO" id="GO:0005829">
    <property type="term" value="C:cytosol"/>
    <property type="evidence" value="ECO:0007669"/>
    <property type="project" value="TreeGrafter"/>
</dbReference>
<dbReference type="GO" id="GO:0004014">
    <property type="term" value="F:adenosylmethionine decarboxylase activity"/>
    <property type="evidence" value="ECO:0007669"/>
    <property type="project" value="UniProtKB-EC"/>
</dbReference>
<dbReference type="GO" id="GO:0019810">
    <property type="term" value="F:putrescine binding"/>
    <property type="evidence" value="ECO:0007669"/>
    <property type="project" value="TreeGrafter"/>
</dbReference>
<dbReference type="GO" id="GO:0008295">
    <property type="term" value="P:spermidine biosynthetic process"/>
    <property type="evidence" value="ECO:0007669"/>
    <property type="project" value="UniProtKB-KW"/>
</dbReference>
<dbReference type="GO" id="GO:0006597">
    <property type="term" value="P:spermine biosynthetic process"/>
    <property type="evidence" value="ECO:0007669"/>
    <property type="project" value="InterPro"/>
</dbReference>
<dbReference type="FunFam" id="3.60.90.10:FF:000003">
    <property type="entry name" value="S-adenosylmethionine decarboxylase proenzyme"/>
    <property type="match status" value="1"/>
</dbReference>
<dbReference type="FunFam" id="3.30.360.50:FF:000003">
    <property type="entry name" value="S-adenosylmethionine decarboxylase proenzyme isoform X2"/>
    <property type="match status" value="1"/>
</dbReference>
<dbReference type="Gene3D" id="3.60.90.10">
    <property type="entry name" value="S-adenosylmethionine decarboxylase"/>
    <property type="match status" value="1"/>
</dbReference>
<dbReference type="InterPro" id="IPR048283">
    <property type="entry name" value="AdoMetDC-like"/>
</dbReference>
<dbReference type="InterPro" id="IPR001985">
    <property type="entry name" value="S-AdoMet_decarboxylase_euk"/>
</dbReference>
<dbReference type="InterPro" id="IPR016067">
    <property type="entry name" value="S-AdoMet_deCO2ase_core"/>
</dbReference>
<dbReference type="InterPro" id="IPR018166">
    <property type="entry name" value="S-AdoMet_deCO2ase_CS"/>
</dbReference>
<dbReference type="NCBIfam" id="TIGR00535">
    <property type="entry name" value="SAM_DCase"/>
    <property type="match status" value="1"/>
</dbReference>
<dbReference type="PANTHER" id="PTHR11570">
    <property type="entry name" value="S-ADENOSYLMETHIONINE DECARBOXYLASE"/>
    <property type="match status" value="1"/>
</dbReference>
<dbReference type="PANTHER" id="PTHR11570:SF0">
    <property type="entry name" value="S-ADENOSYLMETHIONINE DECARBOXYLASE PROENZYME"/>
    <property type="match status" value="1"/>
</dbReference>
<dbReference type="Pfam" id="PF01536">
    <property type="entry name" value="SAM_decarbox"/>
    <property type="match status" value="1"/>
</dbReference>
<dbReference type="PIRSF" id="PIRSF001355">
    <property type="entry name" value="S-AdenosylMet_decarboxylase"/>
    <property type="match status" value="1"/>
</dbReference>
<dbReference type="SUPFAM" id="SSF56276">
    <property type="entry name" value="S-adenosylmethionine decarboxylase"/>
    <property type="match status" value="1"/>
</dbReference>
<dbReference type="PROSITE" id="PS01336">
    <property type="entry name" value="ADOMETDC"/>
    <property type="match status" value="1"/>
</dbReference>
<protein>
    <recommendedName>
        <fullName>S-adenosylmethionine decarboxylase proenzyme 2</fullName>
        <shortName>AdoMetDC 2</shortName>
        <shortName>SAMDC 2</shortName>
        <ecNumber evidence="2">4.1.1.50</ecNumber>
    </recommendedName>
    <component>
        <recommendedName>
            <fullName>S-adenosylmethionine decarboxylase 2 alpha chain</fullName>
        </recommendedName>
    </component>
    <component>
        <recommendedName>
            <fullName>S-adenosylmethionine decarboxylase 2 beta chain</fullName>
        </recommendedName>
    </component>
</protein>
<reference key="1">
    <citation type="journal article" date="1999" name="Mamm. Genome">
        <title>The functional intronless S-adenosylmethionine decarboxylase gene of the mouse (Amd-2) is linked to the ornithine decarboxylase gene (Odc) on chromosome 12 and is present in distantly related species of the genus Mus.</title>
        <authorList>
            <person name="Persson K."/>
            <person name="Heby O."/>
            <person name="Berger F.G."/>
        </authorList>
    </citation>
    <scope>NUCLEOTIDE SEQUENCE [GENOMIC DNA]</scope>
    <source>
        <tissue>Liver</tissue>
    </source>
</reference>
<accession>P82185</accession>
<keyword id="KW-0068">Autocatalytic cleavage</keyword>
<keyword id="KW-0210">Decarboxylase</keyword>
<keyword id="KW-0456">Lyase</keyword>
<keyword id="KW-0597">Phosphoprotein</keyword>
<keyword id="KW-0620">Polyamine biosynthesis</keyword>
<keyword id="KW-0670">Pyruvate</keyword>
<keyword id="KW-0949">S-adenosyl-L-methionine</keyword>
<keyword id="KW-0704">Schiff base</keyword>
<keyword id="KW-0745">Spermidine biosynthesis</keyword>
<keyword id="KW-0865">Zymogen</keyword>
<proteinExistence type="inferred from homology"/>
<sequence>MEAAHFFEGTEKLLEVWFSRQQSDASQGSGDLRTIPRSEWDVLLKDVQCSIISVTKTDKQEAYVLSESSMFVSKRRFILKTCGTTLLLKALVPLLKLARDYSGFDSIQSFFYSRKNFMKPSHQGYPHRNFQEEIEFLNVIFPNGAAYCMGRMNSDCWYLYTLDFPESRVISQPDQTLEILMSELDPAVMDQFYMKDGVTAKDVTRESGIRDLIPGSVIDATLFNPCGYSMNGMKSDGTYWTIHITPEPEFSYVSFETNLSQTSYDDLIRKVVEVFKPGKFVTTLFVNQSSKCRTVLSSPQKIDGFKRLDCQSAMFNDYNFVFTSFAKKQQQQQS</sequence>
<evidence type="ECO:0000250" key="1"/>
<evidence type="ECO:0000250" key="2">
    <source>
        <dbReference type="UniProtKB" id="D3Z6H8"/>
    </source>
</evidence>
<evidence type="ECO:0000250" key="3">
    <source>
        <dbReference type="UniProtKB" id="P0DMN7"/>
    </source>
</evidence>
<evidence type="ECO:0000250" key="4">
    <source>
        <dbReference type="UniProtKB" id="P17707"/>
    </source>
</evidence>
<evidence type="ECO:0000305" key="5"/>